<evidence type="ECO:0000250" key="1">
    <source>
        <dbReference type="UniProtKB" id="Q99714"/>
    </source>
</evidence>
<evidence type="ECO:0000255" key="2"/>
<evidence type="ECO:0000256" key="3">
    <source>
        <dbReference type="SAM" id="MobiDB-lite"/>
    </source>
</evidence>
<evidence type="ECO:0000303" key="4">
    <source>
    </source>
</evidence>
<evidence type="ECO:0000303" key="5">
    <source>
    </source>
</evidence>
<evidence type="ECO:0000303" key="6">
    <source>
    </source>
</evidence>
<evidence type="ECO:0000305" key="7"/>
<evidence type="ECO:0000312" key="8">
    <source>
        <dbReference type="EMBL" id="BAG58787.1"/>
    </source>
</evidence>
<evidence type="ECO:0000312" key="9">
    <source>
        <dbReference type="HGNC" id="HGNC:28326"/>
    </source>
</evidence>
<comment type="function">
    <text evidence="7">Putative oxidoreductase.</text>
</comment>
<comment type="interaction">
    <interactant intactId="EBI-11278980">
        <id>Q6UX07</id>
    </interactant>
    <interactant intactId="EBI-744150">
        <id>Q96EK5</id>
        <label>KIFBP</label>
    </interactant>
    <organismsDiffer>false</organismsDiffer>
    <experiments>3</experiments>
</comment>
<comment type="subcellular location">
    <subcellularLocation>
        <location evidence="7">Secreted</location>
    </subcellularLocation>
</comment>
<comment type="alternative products">
    <event type="alternative splicing"/>
    <isoform>
        <id>Q6UX07-1</id>
        <name>1</name>
        <sequence type="displayed"/>
    </isoform>
    <isoform>
        <id>Q6UX07-2</id>
        <name>2</name>
        <sequence type="described" ref="VSP_029640"/>
    </isoform>
    <isoform>
        <id>Q6UX07-3</id>
        <name>3</name>
        <sequence type="described" ref="VSP_057529"/>
    </isoform>
</comment>
<comment type="similarity">
    <text evidence="7">Belongs to the short-chain dehydrogenases/reductases (SDR) family.</text>
</comment>
<protein>
    <recommendedName>
        <fullName>Dehydrogenase/reductase SDR family member 13</fullName>
        <ecNumber evidence="7">1.1.-.-</ecNumber>
    </recommendedName>
    <alternativeName>
        <fullName evidence="6">Short chain dehydrogenase/reductase family 7C member 5</fullName>
        <shortName evidence="6">Protein SDR7C5</shortName>
    </alternativeName>
</protein>
<organism>
    <name type="scientific">Homo sapiens</name>
    <name type="common">Human</name>
    <dbReference type="NCBI Taxonomy" id="9606"/>
    <lineage>
        <taxon>Eukaryota</taxon>
        <taxon>Metazoa</taxon>
        <taxon>Chordata</taxon>
        <taxon>Craniata</taxon>
        <taxon>Vertebrata</taxon>
        <taxon>Euteleostomi</taxon>
        <taxon>Mammalia</taxon>
        <taxon>Eutheria</taxon>
        <taxon>Euarchontoglires</taxon>
        <taxon>Primates</taxon>
        <taxon>Haplorrhini</taxon>
        <taxon>Catarrhini</taxon>
        <taxon>Hominidae</taxon>
        <taxon>Homo</taxon>
    </lineage>
</organism>
<gene>
    <name evidence="9" type="primary">DHRS13</name>
    <name evidence="6" type="synonym">SDR7C5</name>
    <name type="ORF">UNQ419/PRO853</name>
</gene>
<sequence>MEALLLGAGLLLGAYVLVYYNLVKAPPCGGMGNLRGRTAVVTGANSGIGKMTALELARRGARVVLACRSQERGEAAAFDLRQESGNNEVIFMALDLASLASVRAFATAFLSSEPRLDILIHNAGISSCGRTREAFNLLLRVNHIGPFLLTHLLLPCLKACAPSRVVVVASAAHCRGRLDFKRLDRPVVGWRQELRAYADTKLANVLFARELANQLEATGVTCYAAHPGPVNSELFLRHVPGWLRPLLRPLAWLVLRAPRGGAQTPLYCALQEGIEPLSGRYFANCHVEEVPPAARDDRAAHRLWEASKRLAGLGPGEDAEPDEDPQSEDSEAPSSLSTPHPEEPTVSQPYPSPQSSPDLSKMTHRIQAKVEPEIQLS</sequence>
<accession>Q6UX07</accession>
<accession>B4DJC5</accession>
<accession>Q96BH7</accession>
<feature type="signal peptide" evidence="2">
    <location>
        <begin position="1"/>
        <end position="25"/>
    </location>
</feature>
<feature type="chain" id="PRO_0000311920" description="Dehydrogenase/reductase SDR family member 13">
    <location>
        <begin position="26"/>
        <end position="377"/>
    </location>
</feature>
<feature type="region of interest" description="Disordered" evidence="3">
    <location>
        <begin position="309"/>
        <end position="377"/>
    </location>
</feature>
<feature type="compositionally biased region" description="Acidic residues" evidence="3">
    <location>
        <begin position="317"/>
        <end position="331"/>
    </location>
</feature>
<feature type="compositionally biased region" description="Low complexity" evidence="3">
    <location>
        <begin position="347"/>
        <end position="357"/>
    </location>
</feature>
<feature type="compositionally biased region" description="Basic and acidic residues" evidence="3">
    <location>
        <begin position="368"/>
        <end position="377"/>
    </location>
</feature>
<feature type="active site" description="Proton acceptor" evidence="1">
    <location>
        <position position="197"/>
    </location>
</feature>
<feature type="binding site" evidence="1">
    <location>
        <position position="46"/>
    </location>
    <ligand>
        <name>NAD(+)</name>
        <dbReference type="ChEBI" id="CHEBI:57540"/>
    </ligand>
</feature>
<feature type="binding site" evidence="1">
    <location>
        <position position="48"/>
    </location>
    <ligand>
        <name>NAD(+)</name>
        <dbReference type="ChEBI" id="CHEBI:57540"/>
    </ligand>
</feature>
<feature type="binding site" evidence="1">
    <location>
        <position position="170"/>
    </location>
    <ligand>
        <name>substrate</name>
    </ligand>
</feature>
<feature type="binding site" evidence="1">
    <location>
        <position position="197"/>
    </location>
    <ligand>
        <name>NAD(+)</name>
        <dbReference type="ChEBI" id="CHEBI:57540"/>
    </ligand>
</feature>
<feature type="binding site" evidence="1">
    <location>
        <position position="201"/>
    </location>
    <ligand>
        <name>NAD(+)</name>
        <dbReference type="ChEBI" id="CHEBI:57540"/>
    </ligand>
</feature>
<feature type="binding site" evidence="1">
    <location>
        <position position="232"/>
    </location>
    <ligand>
        <name>NAD(+)</name>
        <dbReference type="ChEBI" id="CHEBI:57540"/>
    </ligand>
</feature>
<feature type="splice variant" id="VSP_029640" description="In isoform 2." evidence="5">
    <location>
        <begin position="1"/>
        <end position="50"/>
    </location>
</feature>
<feature type="splice variant" id="VSP_057529" description="In isoform 3." evidence="4">
    <location>
        <begin position="43"/>
        <end position="123"/>
    </location>
</feature>
<feature type="sequence variant" id="VAR_037348" description="In dbSNP:rs2277666.">
    <original>R</original>
    <variation>Q</variation>
    <location>
        <position position="191"/>
    </location>
</feature>
<feature type="sequence variant" id="VAR_037349" description="In dbSNP:rs4795472.">
    <original>L</original>
    <variation>Q</variation>
    <location>
        <position position="336"/>
    </location>
</feature>
<name>DHR13_HUMAN</name>
<proteinExistence type="evidence at protein level"/>
<reference key="1">
    <citation type="journal article" date="2003" name="Genome Res.">
        <title>The secreted protein discovery initiative (SPDI), a large-scale effort to identify novel human secreted and transmembrane proteins: a bioinformatics assessment.</title>
        <authorList>
            <person name="Clark H.F."/>
            <person name="Gurney A.L."/>
            <person name="Abaya E."/>
            <person name="Baker K."/>
            <person name="Baldwin D.T."/>
            <person name="Brush J."/>
            <person name="Chen J."/>
            <person name="Chow B."/>
            <person name="Chui C."/>
            <person name="Crowley C."/>
            <person name="Currell B."/>
            <person name="Deuel B."/>
            <person name="Dowd P."/>
            <person name="Eaton D."/>
            <person name="Foster J.S."/>
            <person name="Grimaldi C."/>
            <person name="Gu Q."/>
            <person name="Hass P.E."/>
            <person name="Heldens S."/>
            <person name="Huang A."/>
            <person name="Kim H.S."/>
            <person name="Klimowski L."/>
            <person name="Jin Y."/>
            <person name="Johnson S."/>
            <person name="Lee J."/>
            <person name="Lewis L."/>
            <person name="Liao D."/>
            <person name="Mark M.R."/>
            <person name="Robbie E."/>
            <person name="Sanchez C."/>
            <person name="Schoenfeld J."/>
            <person name="Seshagiri S."/>
            <person name="Simmons L."/>
            <person name="Singh J."/>
            <person name="Smith V."/>
            <person name="Stinson J."/>
            <person name="Vagts A."/>
            <person name="Vandlen R.L."/>
            <person name="Watanabe C."/>
            <person name="Wieand D."/>
            <person name="Woods K."/>
            <person name="Xie M.-H."/>
            <person name="Yansura D.G."/>
            <person name="Yi S."/>
            <person name="Yu G."/>
            <person name="Yuan J."/>
            <person name="Zhang M."/>
            <person name="Zhang Z."/>
            <person name="Goddard A.D."/>
            <person name="Wood W.I."/>
            <person name="Godowski P.J."/>
            <person name="Gray A.M."/>
        </authorList>
    </citation>
    <scope>NUCLEOTIDE SEQUENCE [LARGE SCALE MRNA] (ISOFORM 1)</scope>
</reference>
<reference key="2">
    <citation type="journal article" date="2004" name="Nat. Genet.">
        <title>Complete sequencing and characterization of 21,243 full-length human cDNAs.</title>
        <authorList>
            <person name="Ota T."/>
            <person name="Suzuki Y."/>
            <person name="Nishikawa T."/>
            <person name="Otsuki T."/>
            <person name="Sugiyama T."/>
            <person name="Irie R."/>
            <person name="Wakamatsu A."/>
            <person name="Hayashi K."/>
            <person name="Sato H."/>
            <person name="Nagai K."/>
            <person name="Kimura K."/>
            <person name="Makita H."/>
            <person name="Sekine M."/>
            <person name="Obayashi M."/>
            <person name="Nishi T."/>
            <person name="Shibahara T."/>
            <person name="Tanaka T."/>
            <person name="Ishii S."/>
            <person name="Yamamoto J."/>
            <person name="Saito K."/>
            <person name="Kawai Y."/>
            <person name="Isono Y."/>
            <person name="Nakamura Y."/>
            <person name="Nagahari K."/>
            <person name="Murakami K."/>
            <person name="Yasuda T."/>
            <person name="Iwayanagi T."/>
            <person name="Wagatsuma M."/>
            <person name="Shiratori A."/>
            <person name="Sudo H."/>
            <person name="Hosoiri T."/>
            <person name="Kaku Y."/>
            <person name="Kodaira H."/>
            <person name="Kondo H."/>
            <person name="Sugawara M."/>
            <person name="Takahashi M."/>
            <person name="Kanda K."/>
            <person name="Yokoi T."/>
            <person name="Furuya T."/>
            <person name="Kikkawa E."/>
            <person name="Omura Y."/>
            <person name="Abe K."/>
            <person name="Kamihara K."/>
            <person name="Katsuta N."/>
            <person name="Sato K."/>
            <person name="Tanikawa M."/>
            <person name="Yamazaki M."/>
            <person name="Ninomiya K."/>
            <person name="Ishibashi T."/>
            <person name="Yamashita H."/>
            <person name="Murakawa K."/>
            <person name="Fujimori K."/>
            <person name="Tanai H."/>
            <person name="Kimata M."/>
            <person name="Watanabe M."/>
            <person name="Hiraoka S."/>
            <person name="Chiba Y."/>
            <person name="Ishida S."/>
            <person name="Ono Y."/>
            <person name="Takiguchi S."/>
            <person name="Watanabe S."/>
            <person name="Yosida M."/>
            <person name="Hotuta T."/>
            <person name="Kusano J."/>
            <person name="Kanehori K."/>
            <person name="Takahashi-Fujii A."/>
            <person name="Hara H."/>
            <person name="Tanase T.-O."/>
            <person name="Nomura Y."/>
            <person name="Togiya S."/>
            <person name="Komai F."/>
            <person name="Hara R."/>
            <person name="Takeuchi K."/>
            <person name="Arita M."/>
            <person name="Imose N."/>
            <person name="Musashino K."/>
            <person name="Yuuki H."/>
            <person name="Oshima A."/>
            <person name="Sasaki N."/>
            <person name="Aotsuka S."/>
            <person name="Yoshikawa Y."/>
            <person name="Matsunawa H."/>
            <person name="Ichihara T."/>
            <person name="Shiohata N."/>
            <person name="Sano S."/>
            <person name="Moriya S."/>
            <person name="Momiyama H."/>
            <person name="Satoh N."/>
            <person name="Takami S."/>
            <person name="Terashima Y."/>
            <person name="Suzuki O."/>
            <person name="Nakagawa S."/>
            <person name="Senoh A."/>
            <person name="Mizoguchi H."/>
            <person name="Goto Y."/>
            <person name="Shimizu F."/>
            <person name="Wakebe H."/>
            <person name="Hishigaki H."/>
            <person name="Watanabe T."/>
            <person name="Sugiyama A."/>
            <person name="Takemoto M."/>
            <person name="Kawakami B."/>
            <person name="Yamazaki M."/>
            <person name="Watanabe K."/>
            <person name="Kumagai A."/>
            <person name="Itakura S."/>
            <person name="Fukuzumi Y."/>
            <person name="Fujimori Y."/>
            <person name="Komiyama M."/>
            <person name="Tashiro H."/>
            <person name="Tanigami A."/>
            <person name="Fujiwara T."/>
            <person name="Ono T."/>
            <person name="Yamada K."/>
            <person name="Fujii Y."/>
            <person name="Ozaki K."/>
            <person name="Hirao M."/>
            <person name="Ohmori Y."/>
            <person name="Kawabata A."/>
            <person name="Hikiji T."/>
            <person name="Kobatake N."/>
            <person name="Inagaki H."/>
            <person name="Ikema Y."/>
            <person name="Okamoto S."/>
            <person name="Okitani R."/>
            <person name="Kawakami T."/>
            <person name="Noguchi S."/>
            <person name="Itoh T."/>
            <person name="Shigeta K."/>
            <person name="Senba T."/>
            <person name="Matsumura K."/>
            <person name="Nakajima Y."/>
            <person name="Mizuno T."/>
            <person name="Morinaga M."/>
            <person name="Sasaki M."/>
            <person name="Togashi T."/>
            <person name="Oyama M."/>
            <person name="Hata H."/>
            <person name="Watanabe M."/>
            <person name="Komatsu T."/>
            <person name="Mizushima-Sugano J."/>
            <person name="Satoh T."/>
            <person name="Shirai Y."/>
            <person name="Takahashi Y."/>
            <person name="Nakagawa K."/>
            <person name="Okumura K."/>
            <person name="Nagase T."/>
            <person name="Nomura N."/>
            <person name="Kikuchi H."/>
            <person name="Masuho Y."/>
            <person name="Yamashita R."/>
            <person name="Nakai K."/>
            <person name="Yada T."/>
            <person name="Nakamura Y."/>
            <person name="Ohara O."/>
            <person name="Isogai T."/>
            <person name="Sugano S."/>
        </authorList>
    </citation>
    <scope>NUCLEOTIDE SEQUENCE [LARGE SCALE MRNA] (ISOFORM 3)</scope>
    <source>
        <tissue evidence="8">Subthalamic nucleus</tissue>
    </source>
</reference>
<reference key="3">
    <citation type="journal article" date="2006" name="Nature">
        <title>DNA sequence of human chromosome 17 and analysis of rearrangement in the human lineage.</title>
        <authorList>
            <person name="Zody M.C."/>
            <person name="Garber M."/>
            <person name="Adams D.J."/>
            <person name="Sharpe T."/>
            <person name="Harrow J."/>
            <person name="Lupski J.R."/>
            <person name="Nicholson C."/>
            <person name="Searle S.M."/>
            <person name="Wilming L."/>
            <person name="Young S.K."/>
            <person name="Abouelleil A."/>
            <person name="Allen N.R."/>
            <person name="Bi W."/>
            <person name="Bloom T."/>
            <person name="Borowsky M.L."/>
            <person name="Bugalter B.E."/>
            <person name="Butler J."/>
            <person name="Chang J.L."/>
            <person name="Chen C.-K."/>
            <person name="Cook A."/>
            <person name="Corum B."/>
            <person name="Cuomo C.A."/>
            <person name="de Jong P.J."/>
            <person name="DeCaprio D."/>
            <person name="Dewar K."/>
            <person name="FitzGerald M."/>
            <person name="Gilbert J."/>
            <person name="Gibson R."/>
            <person name="Gnerre S."/>
            <person name="Goldstein S."/>
            <person name="Grafham D.V."/>
            <person name="Grocock R."/>
            <person name="Hafez N."/>
            <person name="Hagopian D.S."/>
            <person name="Hart E."/>
            <person name="Norman C.H."/>
            <person name="Humphray S."/>
            <person name="Jaffe D.B."/>
            <person name="Jones M."/>
            <person name="Kamal M."/>
            <person name="Khodiyar V.K."/>
            <person name="LaButti K."/>
            <person name="Laird G."/>
            <person name="Lehoczky J."/>
            <person name="Liu X."/>
            <person name="Lokyitsang T."/>
            <person name="Loveland J."/>
            <person name="Lui A."/>
            <person name="Macdonald P."/>
            <person name="Major J.E."/>
            <person name="Matthews L."/>
            <person name="Mauceli E."/>
            <person name="McCarroll S.A."/>
            <person name="Mihalev A.H."/>
            <person name="Mudge J."/>
            <person name="Nguyen C."/>
            <person name="Nicol R."/>
            <person name="O'Leary S.B."/>
            <person name="Osoegawa K."/>
            <person name="Schwartz D.C."/>
            <person name="Shaw-Smith C."/>
            <person name="Stankiewicz P."/>
            <person name="Steward C."/>
            <person name="Swarbreck D."/>
            <person name="Venkataraman V."/>
            <person name="Whittaker C.A."/>
            <person name="Yang X."/>
            <person name="Zimmer A.R."/>
            <person name="Bradley A."/>
            <person name="Hubbard T."/>
            <person name="Birren B.W."/>
            <person name="Rogers J."/>
            <person name="Lander E.S."/>
            <person name="Nusbaum C."/>
        </authorList>
    </citation>
    <scope>NUCLEOTIDE SEQUENCE [LARGE SCALE GENOMIC DNA]</scope>
</reference>
<reference key="4">
    <citation type="submission" date="2006-12" db="EMBL/GenBank/DDBJ databases">
        <authorList>
            <person name="Mural R.J."/>
            <person name="Istrail S."/>
            <person name="Sutton G.G."/>
            <person name="Florea L."/>
            <person name="Halpern A.L."/>
            <person name="Mobarry C.M."/>
            <person name="Lippert R."/>
            <person name="Walenz B."/>
            <person name="Shatkay H."/>
            <person name="Dew I."/>
            <person name="Miller J.R."/>
            <person name="Flanigan M.J."/>
            <person name="Edwards N.J."/>
            <person name="Bolanos R."/>
            <person name="Fasulo D."/>
            <person name="Halldorsson B.V."/>
            <person name="Hannenhalli S."/>
            <person name="Turner R."/>
            <person name="Yooseph S."/>
            <person name="Lu F."/>
            <person name="Nusskern D.R."/>
            <person name="Shue B.C."/>
            <person name="Zheng X.H."/>
            <person name="Zhong F."/>
            <person name="Delcher A.L."/>
            <person name="Huson D.H."/>
            <person name="Kravitz S.A."/>
            <person name="Mouchard L."/>
            <person name="Reinert K."/>
            <person name="Remington K.A."/>
            <person name="Clark A.G."/>
            <person name="Waterman M.S."/>
            <person name="Eichler E.E."/>
            <person name="Adams M.D."/>
            <person name="Hunkapiller M.W."/>
            <person name="Myers E.W."/>
            <person name="Venter J.C."/>
        </authorList>
    </citation>
    <scope>NUCLEOTIDE SEQUENCE [LARGE SCALE GENOMIC DNA]</scope>
</reference>
<reference key="5">
    <citation type="journal article" date="2004" name="Genome Res.">
        <title>The status, quality, and expansion of the NIH full-length cDNA project: the Mammalian Gene Collection (MGC).</title>
        <authorList>
            <consortium name="The MGC Project Team"/>
        </authorList>
    </citation>
    <scope>NUCLEOTIDE SEQUENCE [LARGE SCALE MRNA] (ISOFORM 2)</scope>
    <source>
        <tissue>Lung</tissue>
    </source>
</reference>
<reference key="6">
    <citation type="journal article" date="2009" name="Chem. Biol. Interact.">
        <title>The SDR (short-chain dehydrogenase/reductase and related enzymes) nomenclature initiative.</title>
        <authorList>
            <person name="Persson B."/>
            <person name="Kallberg Y."/>
            <person name="Bray J.E."/>
            <person name="Bruford E."/>
            <person name="Dellaporta S.L."/>
            <person name="Favia A.D."/>
            <person name="Duarte R.G."/>
            <person name="Joernvall H."/>
            <person name="Kavanagh K.L."/>
            <person name="Kedishvili N."/>
            <person name="Kisiela M."/>
            <person name="Maser E."/>
            <person name="Mindnich R."/>
            <person name="Orchard S."/>
            <person name="Penning T.M."/>
            <person name="Thornton J.M."/>
            <person name="Adamski J."/>
            <person name="Oppermann U."/>
        </authorList>
    </citation>
    <scope>GENE FAMILY</scope>
    <scope>NOMENCLATURE</scope>
</reference>
<dbReference type="EC" id="1.1.-.-" evidence="7"/>
<dbReference type="EMBL" id="AY358566">
    <property type="protein sequence ID" value="AAQ88929.1"/>
    <property type="molecule type" value="mRNA"/>
</dbReference>
<dbReference type="EMBL" id="AK296017">
    <property type="protein sequence ID" value="BAG58787.1"/>
    <property type="molecule type" value="mRNA"/>
</dbReference>
<dbReference type="EMBL" id="AC024267">
    <property type="status" value="NOT_ANNOTATED_CDS"/>
    <property type="molecule type" value="Genomic_DNA"/>
</dbReference>
<dbReference type="EMBL" id="CH471159">
    <property type="protein sequence ID" value="EAW51159.1"/>
    <property type="molecule type" value="Genomic_DNA"/>
</dbReference>
<dbReference type="EMBL" id="CH471159">
    <property type="protein sequence ID" value="EAW51153.1"/>
    <property type="molecule type" value="Genomic_DNA"/>
</dbReference>
<dbReference type="EMBL" id="BC015582">
    <property type="protein sequence ID" value="AAH15582.1"/>
    <property type="molecule type" value="mRNA"/>
</dbReference>
<dbReference type="CCDS" id="CCDS11246.2">
    <molecule id="Q6UX07-1"/>
</dbReference>
<dbReference type="RefSeq" id="NP_653284.2">
    <molecule id="Q6UX07-1"/>
    <property type="nucleotide sequence ID" value="NM_144683.4"/>
</dbReference>
<dbReference type="SMR" id="Q6UX07"/>
<dbReference type="BioGRID" id="127030">
    <property type="interactions" value="44"/>
</dbReference>
<dbReference type="FunCoup" id="Q6UX07">
    <property type="interactions" value="200"/>
</dbReference>
<dbReference type="IntAct" id="Q6UX07">
    <property type="interactions" value="21"/>
</dbReference>
<dbReference type="STRING" id="9606.ENSP00000368173"/>
<dbReference type="iPTMnet" id="Q6UX07"/>
<dbReference type="PhosphoSitePlus" id="Q6UX07"/>
<dbReference type="SwissPalm" id="Q6UX07"/>
<dbReference type="BioMuta" id="DHRS13"/>
<dbReference type="DMDM" id="74738164"/>
<dbReference type="jPOST" id="Q6UX07"/>
<dbReference type="MassIVE" id="Q6UX07"/>
<dbReference type="PaxDb" id="9606-ENSP00000368173"/>
<dbReference type="PeptideAtlas" id="Q6UX07"/>
<dbReference type="ProteomicsDB" id="4366"/>
<dbReference type="ProteomicsDB" id="67548">
    <molecule id="Q6UX07-1"/>
</dbReference>
<dbReference type="ProteomicsDB" id="67549">
    <molecule id="Q6UX07-2"/>
</dbReference>
<dbReference type="Pumba" id="Q6UX07"/>
<dbReference type="TopDownProteomics" id="Q6UX07-1">
    <molecule id="Q6UX07-1"/>
</dbReference>
<dbReference type="Antibodypedia" id="14931">
    <property type="antibodies" value="77 antibodies from 14 providers"/>
</dbReference>
<dbReference type="DNASU" id="147015"/>
<dbReference type="Ensembl" id="ENST00000378895.9">
    <molecule id="Q6UX07-1"/>
    <property type="protein sequence ID" value="ENSP00000368173.4"/>
    <property type="gene ID" value="ENSG00000167536.14"/>
</dbReference>
<dbReference type="Ensembl" id="ENST00000394901.7">
    <molecule id="Q6UX07-2"/>
    <property type="protein sequence ID" value="ENSP00000378361.3"/>
    <property type="gene ID" value="ENSG00000167536.14"/>
</dbReference>
<dbReference type="Ensembl" id="ENST00000426464.2">
    <molecule id="Q6UX07-3"/>
    <property type="protein sequence ID" value="ENSP00000412826.2"/>
    <property type="gene ID" value="ENSG00000167536.14"/>
</dbReference>
<dbReference type="GeneID" id="147015"/>
<dbReference type="KEGG" id="hsa:147015"/>
<dbReference type="MANE-Select" id="ENST00000378895.9">
    <property type="protein sequence ID" value="ENSP00000368173.4"/>
    <property type="RefSeq nucleotide sequence ID" value="NM_144683.4"/>
    <property type="RefSeq protein sequence ID" value="NP_653284.2"/>
</dbReference>
<dbReference type="UCSC" id="uc002hdd.5">
    <molecule id="Q6UX07-1"/>
    <property type="organism name" value="human"/>
</dbReference>
<dbReference type="UCSC" id="uc010wba.3">
    <property type="organism name" value="human"/>
</dbReference>
<dbReference type="AGR" id="HGNC:28326"/>
<dbReference type="CTD" id="147015"/>
<dbReference type="DisGeNET" id="147015"/>
<dbReference type="GeneCards" id="DHRS13"/>
<dbReference type="HGNC" id="HGNC:28326">
    <property type="gene designation" value="DHRS13"/>
</dbReference>
<dbReference type="HPA" id="ENSG00000167536">
    <property type="expression patterns" value="Tissue enhanced (bone)"/>
</dbReference>
<dbReference type="MIM" id="616157">
    <property type="type" value="gene"/>
</dbReference>
<dbReference type="neXtProt" id="NX_Q6UX07"/>
<dbReference type="OpenTargets" id="ENSG00000167536"/>
<dbReference type="PharmGKB" id="PA147358144"/>
<dbReference type="VEuPathDB" id="HostDB:ENSG00000167536"/>
<dbReference type="eggNOG" id="KOG1208">
    <property type="taxonomic scope" value="Eukaryota"/>
</dbReference>
<dbReference type="GeneTree" id="ENSGT00940000155599"/>
<dbReference type="HOGENOM" id="CLU_010194_44_5_1"/>
<dbReference type="InParanoid" id="Q6UX07"/>
<dbReference type="OMA" id="NEVIFMM"/>
<dbReference type="OrthoDB" id="191139at2759"/>
<dbReference type="PAN-GO" id="Q6UX07">
    <property type="GO annotations" value="3 GO annotations based on evolutionary models"/>
</dbReference>
<dbReference type="PhylomeDB" id="Q6UX07"/>
<dbReference type="TreeFam" id="TF105429"/>
<dbReference type="PathwayCommons" id="Q6UX07"/>
<dbReference type="SignaLink" id="Q6UX07"/>
<dbReference type="BioGRID-ORCS" id="147015">
    <property type="hits" value="21 hits in 1162 CRISPR screens"/>
</dbReference>
<dbReference type="ChiTaRS" id="DHRS13">
    <property type="organism name" value="human"/>
</dbReference>
<dbReference type="GenomeRNAi" id="147015"/>
<dbReference type="Pharos" id="Q6UX07">
    <property type="development level" value="Tdark"/>
</dbReference>
<dbReference type="PRO" id="PR:Q6UX07"/>
<dbReference type="Proteomes" id="UP000005640">
    <property type="component" value="Chromosome 17"/>
</dbReference>
<dbReference type="RNAct" id="Q6UX07">
    <property type="molecule type" value="protein"/>
</dbReference>
<dbReference type="Bgee" id="ENSG00000167536">
    <property type="expression patterns" value="Expressed in male germ line stem cell (sensu Vertebrata) in testis and 105 other cell types or tissues"/>
</dbReference>
<dbReference type="GO" id="GO:0005576">
    <property type="term" value="C:extracellular region"/>
    <property type="evidence" value="ECO:0007669"/>
    <property type="project" value="UniProtKB-SubCell"/>
</dbReference>
<dbReference type="GO" id="GO:0016020">
    <property type="term" value="C:membrane"/>
    <property type="evidence" value="ECO:0007005"/>
    <property type="project" value="UniProtKB"/>
</dbReference>
<dbReference type="GO" id="GO:0016491">
    <property type="term" value="F:oxidoreductase activity"/>
    <property type="evidence" value="ECO:0007669"/>
    <property type="project" value="UniProtKB-KW"/>
</dbReference>
<dbReference type="CDD" id="cd05327">
    <property type="entry name" value="retinol-DH_like_SDR_c_like"/>
    <property type="match status" value="1"/>
</dbReference>
<dbReference type="FunFam" id="3.40.50.720:FF:000364">
    <property type="entry name" value="Dehydrogenase/reductase SDR family member 13"/>
    <property type="match status" value="1"/>
</dbReference>
<dbReference type="Gene3D" id="3.40.50.720">
    <property type="entry name" value="NAD(P)-binding Rossmann-like Domain"/>
    <property type="match status" value="1"/>
</dbReference>
<dbReference type="InterPro" id="IPR036291">
    <property type="entry name" value="NAD(P)-bd_dom_sf"/>
</dbReference>
<dbReference type="InterPro" id="IPR002347">
    <property type="entry name" value="SDR_fam"/>
</dbReference>
<dbReference type="PANTHER" id="PTHR43157:SF44">
    <property type="entry name" value="DEHYDROGENASE_REDUCTASE SDR FAMILY MEMBER 13"/>
    <property type="match status" value="1"/>
</dbReference>
<dbReference type="PANTHER" id="PTHR43157">
    <property type="entry name" value="PHOSPHATIDYLINOSITOL-GLYCAN BIOSYNTHESIS CLASS F PROTEIN-RELATED"/>
    <property type="match status" value="1"/>
</dbReference>
<dbReference type="Pfam" id="PF00106">
    <property type="entry name" value="adh_short"/>
    <property type="match status" value="1"/>
</dbReference>
<dbReference type="PRINTS" id="PR00081">
    <property type="entry name" value="GDHRDH"/>
</dbReference>
<dbReference type="SUPFAM" id="SSF51735">
    <property type="entry name" value="NAD(P)-binding Rossmann-fold domains"/>
    <property type="match status" value="1"/>
</dbReference>
<keyword id="KW-0025">Alternative splicing</keyword>
<keyword id="KW-0520">NAD</keyword>
<keyword id="KW-0521">NADP</keyword>
<keyword id="KW-0560">Oxidoreductase</keyword>
<keyword id="KW-1267">Proteomics identification</keyword>
<keyword id="KW-1185">Reference proteome</keyword>
<keyword id="KW-0964">Secreted</keyword>
<keyword id="KW-0732">Signal</keyword>